<name>SE6L1_MOUSE</name>
<sequence>MPVARPQAAGPDRISLFLVAFLLGSPAAAQAEDGGPEGEMHPSTAYLLPSASLESSLEEGVTSAAPGLLPSQEALEAMEESLPPALPDEASVQHTPALRKGLPSLKQLNSARRQLRPLATPTTLQRLGSPASATTKLREPEDPEQPTAPAPLQIAPFTALATTLPHSPQPAQAPDDSSPGSPLDKGDNELTGSASEESQETTTSTIVTTTIITTEQAPALCGVSFSDPEGYIDSSDFPPQPYSSFLECTYNVTVYTGYGVELQVKSVNLSEGELLSIRGVDGPTLTVLANQTLLVEGQVIRSPTNTISVYFRTFQDDGLGTFQLHYQAFMLSCPFPRRPDAGEVTVMDLHSGGVAHFHCHLGYELQGAKTLTCINASKPHWSSQEPVCSAPCGGAVHNATIGRVLSPSFPGTANGSQLCVWTIEAPEGQKLHLHLERLLLHEKDRMIVYSGRTNTSALLYDSLRTESVPFEGLLSEGSSIRIEFTSDQGQAASAFNIRFEAFEKGHCYEPYIQNGNFTTSDPTYNIGTIVEFTCDPGHSLEQGPAVIECVNVRDPYWNDTEPLCRAMCGGELSAVAGVVLSPNWPEPYAEGEDCVWKIHVGEEKRIFLDIQFLNLSNSDILTIYDGDEVVPHVLGQYFGHSSPQKLYSSTPDLTIQFHSDPAGLIFGKGQGFIMNYIEVSRNDSCSDLPEIQNGWKTTSHTELVRGARITYQCDPGYDIVGSDTLTCQWDLSWSSDPPFCEKIMYCTDPGEVEHSTRLISDPVLLVGTTIQYTCSPGFVLEGSSLLTCYSRETGTPIWTSRLPHCVSEESLACDNPGLPENGYQILYKRLYLPGESLTFMCYEGFELMGEVTIRCILGQPSHWSGPLPICKVNQDSFEHALEAEAAAESSLEGGNMALAIFIPVLLISLLLGGAYIYVTRCRQYSSLRLPLMYSHPYSQITVETEFDNPIYETGETREYEVSI</sequence>
<keyword id="KW-0025">Alternative splicing</keyword>
<keyword id="KW-1003">Cell membrane</keyword>
<keyword id="KW-1015">Disulfide bond</keyword>
<keyword id="KW-0256">Endoplasmic reticulum</keyword>
<keyword id="KW-0325">Glycoprotein</keyword>
<keyword id="KW-0472">Membrane</keyword>
<keyword id="KW-1185">Reference proteome</keyword>
<keyword id="KW-0677">Repeat</keyword>
<keyword id="KW-0732">Signal</keyword>
<keyword id="KW-0768">Sushi</keyword>
<keyword id="KW-0812">Transmembrane</keyword>
<keyword id="KW-1133">Transmembrane helix</keyword>
<comment type="function">
    <text evidence="1 6">Candidate tumor suppressor gene. May contribute to specialized endoplasmic reticulum functions in neurons.</text>
</comment>
<comment type="subcellular location">
    <subcellularLocation>
        <location evidence="9">Cell membrane</location>
        <topology evidence="9">Single-pass type I membrane protein</topology>
    </subcellularLocation>
    <subcellularLocation>
        <location evidence="6">Endoplasmic reticulum membrane</location>
        <topology evidence="6">Single-pass type I membrane protein</topology>
    </subcellularLocation>
    <text>In cerebellar predominantly localized to the endoplasmic reticulum.</text>
</comment>
<comment type="alternative products">
    <event type="alternative splicing"/>
    <isoform>
        <id>Q6P1D5-1</id>
        <name>1</name>
        <sequence type="displayed"/>
    </isoform>
    <isoform>
        <id>Q6P1D5-2</id>
        <name>2</name>
        <sequence type="described" ref="VSP_033594"/>
    </isoform>
</comment>
<comment type="tissue specificity">
    <text evidence="6">Expressed exclusively in the brain, predominantly in neurons. Wide expression in the gray matter of the brain with high levels in the olfactory bulb, anterior olfactory nuclei, hippocampal formation and cerebellar cortex. Detected diffusely and weakly in the white matter, such as the corpus callosum and cerebellar medulla. In the cerebellar cortex, intensely expressed in Purkinje cells and granule cells. Detected also in interneurons in the molecular layer.</text>
</comment>
<comment type="disruption phenotype">
    <text evidence="6">Mice lacking Sez6, Sez6l1, Sez6l2 exhibit motor discordination, and PCs are ofen innervated by multiple climbing fibers with different neuronal origins in the cerebellum.</text>
</comment>
<comment type="similarity">
    <text evidence="8">Belongs to the SEZ6 family.</text>
</comment>
<organism>
    <name type="scientific">Mus musculus</name>
    <name type="common">Mouse</name>
    <dbReference type="NCBI Taxonomy" id="10090"/>
    <lineage>
        <taxon>Eukaryota</taxon>
        <taxon>Metazoa</taxon>
        <taxon>Chordata</taxon>
        <taxon>Craniata</taxon>
        <taxon>Vertebrata</taxon>
        <taxon>Euteleostomi</taxon>
        <taxon>Mammalia</taxon>
        <taxon>Eutheria</taxon>
        <taxon>Euarchontoglires</taxon>
        <taxon>Glires</taxon>
        <taxon>Rodentia</taxon>
        <taxon>Myomorpha</taxon>
        <taxon>Muroidea</taxon>
        <taxon>Muridae</taxon>
        <taxon>Murinae</taxon>
        <taxon>Mus</taxon>
        <taxon>Mus</taxon>
    </lineage>
</organism>
<gene>
    <name type="primary">Sez6l</name>
    <name type="synonym">Aig1l</name>
    <name type="synonym">Kiaa0927</name>
</gene>
<dbReference type="EMBL" id="AB206790">
    <property type="protein sequence ID" value="BAE44443.1"/>
    <property type="molecule type" value="mRNA"/>
</dbReference>
<dbReference type="EMBL" id="DQ167195">
    <property type="protein sequence ID" value="AAZ99451.1"/>
    <property type="molecule type" value="mRNA"/>
</dbReference>
<dbReference type="EMBL" id="AK083229">
    <property type="protein sequence ID" value="BAC38818.1"/>
    <property type="molecule type" value="mRNA"/>
</dbReference>
<dbReference type="EMBL" id="BC056471">
    <property type="protein sequence ID" value="AAH56471.1"/>
    <property type="molecule type" value="mRNA"/>
</dbReference>
<dbReference type="EMBL" id="BC065117">
    <property type="protein sequence ID" value="AAH65117.1"/>
    <property type="molecule type" value="mRNA"/>
</dbReference>
<dbReference type="EMBL" id="BC065129">
    <property type="protein sequence ID" value="AAH65129.1"/>
    <property type="molecule type" value="mRNA"/>
</dbReference>
<dbReference type="EMBL" id="BC099839">
    <property type="protein sequence ID" value="AAH99839.1"/>
    <property type="molecule type" value="mRNA"/>
</dbReference>
<dbReference type="CCDS" id="CCDS57373.1">
    <molecule id="Q6P1D5-1"/>
</dbReference>
<dbReference type="RefSeq" id="NP_001240845.1">
    <molecule id="Q6P1D5-1"/>
    <property type="nucleotide sequence ID" value="NM_001253916.2"/>
</dbReference>
<dbReference type="RefSeq" id="NP_001240846.1">
    <property type="nucleotide sequence ID" value="NM_001253917.1"/>
</dbReference>
<dbReference type="RefSeq" id="NP_001390218.1">
    <molecule id="Q6P1D5-2"/>
    <property type="nucleotide sequence ID" value="NM_001403289.1"/>
</dbReference>
<dbReference type="RefSeq" id="NP_064366.2">
    <property type="nucleotide sequence ID" value="NM_019982.3"/>
</dbReference>
<dbReference type="RefSeq" id="XP_006535221.1">
    <property type="nucleotide sequence ID" value="XM_006535158.3"/>
</dbReference>
<dbReference type="SMR" id="Q6P1D5"/>
<dbReference type="FunCoup" id="Q6P1D5">
    <property type="interactions" value="362"/>
</dbReference>
<dbReference type="STRING" id="10090.ENSMUSP00000078454"/>
<dbReference type="GlyConnect" id="2692">
    <property type="glycosylation" value="2 N-Linked glycans (1 site)"/>
</dbReference>
<dbReference type="GlyCosmos" id="Q6P1D5">
    <property type="glycosylation" value="11 sites, 2 glycans"/>
</dbReference>
<dbReference type="GlyGen" id="Q6P1D5">
    <property type="glycosylation" value="12 sites, 8 N-linked glycans (6 sites)"/>
</dbReference>
<dbReference type="iPTMnet" id="Q6P1D5"/>
<dbReference type="PhosphoSitePlus" id="Q6P1D5"/>
<dbReference type="SwissPalm" id="Q6P1D5"/>
<dbReference type="PaxDb" id="10090-ENSMUSP00000078454"/>
<dbReference type="ProteomicsDB" id="255509">
    <molecule id="Q6P1D5-1"/>
</dbReference>
<dbReference type="ProteomicsDB" id="255510">
    <molecule id="Q6P1D5-2"/>
</dbReference>
<dbReference type="Antibodypedia" id="54796">
    <property type="antibodies" value="66 antibodies from 17 providers"/>
</dbReference>
<dbReference type="Ensembl" id="ENSMUST00000079491.14">
    <molecule id="Q6P1D5-1"/>
    <property type="protein sequence ID" value="ENSMUSP00000078454.8"/>
    <property type="gene ID" value="ENSMUSG00000058153.16"/>
</dbReference>
<dbReference type="GeneID" id="56747"/>
<dbReference type="KEGG" id="mmu:56747"/>
<dbReference type="UCSC" id="uc008yti.2">
    <molecule id="Q6P1D5-1"/>
    <property type="organism name" value="mouse"/>
</dbReference>
<dbReference type="UCSC" id="uc012ebi.2">
    <molecule id="Q6P1D5-2"/>
    <property type="organism name" value="mouse"/>
</dbReference>
<dbReference type="AGR" id="MGI:1935121"/>
<dbReference type="CTD" id="23544"/>
<dbReference type="MGI" id="MGI:1935121">
    <property type="gene designation" value="Sez6l"/>
</dbReference>
<dbReference type="VEuPathDB" id="HostDB:ENSMUSG00000058153"/>
<dbReference type="eggNOG" id="ENOG502QVYR">
    <property type="taxonomic scope" value="Eukaryota"/>
</dbReference>
<dbReference type="GeneTree" id="ENSGT00940000158873"/>
<dbReference type="InParanoid" id="Q6P1D5"/>
<dbReference type="PhylomeDB" id="Q6P1D5"/>
<dbReference type="TreeFam" id="TF330037"/>
<dbReference type="BioGRID-ORCS" id="56747">
    <property type="hits" value="1 hit in 78 CRISPR screens"/>
</dbReference>
<dbReference type="ChiTaRS" id="Sez6l">
    <property type="organism name" value="mouse"/>
</dbReference>
<dbReference type="PRO" id="PR:Q6P1D5"/>
<dbReference type="Proteomes" id="UP000000589">
    <property type="component" value="Chromosome 5"/>
</dbReference>
<dbReference type="RNAct" id="Q6P1D5">
    <property type="molecule type" value="protein"/>
</dbReference>
<dbReference type="Bgee" id="ENSMUSG00000058153">
    <property type="expression patterns" value="Expressed in cortical plate and 114 other cell types or tissues"/>
</dbReference>
<dbReference type="ExpressionAtlas" id="Q6P1D5">
    <property type="expression patterns" value="baseline and differential"/>
</dbReference>
<dbReference type="GO" id="GO:0005783">
    <property type="term" value="C:endoplasmic reticulum"/>
    <property type="evidence" value="ECO:0000314"/>
    <property type="project" value="MGI"/>
</dbReference>
<dbReference type="GO" id="GO:0005789">
    <property type="term" value="C:endoplasmic reticulum membrane"/>
    <property type="evidence" value="ECO:0007669"/>
    <property type="project" value="UniProtKB-SubCell"/>
</dbReference>
<dbReference type="GO" id="GO:0098978">
    <property type="term" value="C:glutamatergic synapse"/>
    <property type="evidence" value="ECO:0000314"/>
    <property type="project" value="SynGO"/>
</dbReference>
<dbReference type="GO" id="GO:0043025">
    <property type="term" value="C:neuronal cell body"/>
    <property type="evidence" value="ECO:0000314"/>
    <property type="project" value="MGI"/>
</dbReference>
<dbReference type="GO" id="GO:0045211">
    <property type="term" value="C:postsynaptic membrane"/>
    <property type="evidence" value="ECO:0000314"/>
    <property type="project" value="SynGO"/>
</dbReference>
<dbReference type="GO" id="GO:0008344">
    <property type="term" value="P:adult locomotory behavior"/>
    <property type="evidence" value="ECO:0000316"/>
    <property type="project" value="MGI"/>
</dbReference>
<dbReference type="GO" id="GO:0021680">
    <property type="term" value="P:cerebellar Purkinje cell layer development"/>
    <property type="evidence" value="ECO:0000316"/>
    <property type="project" value="MGI"/>
</dbReference>
<dbReference type="GO" id="GO:0060074">
    <property type="term" value="P:synapse maturation"/>
    <property type="evidence" value="ECO:0000316"/>
    <property type="project" value="MGI"/>
</dbReference>
<dbReference type="CDD" id="cd00033">
    <property type="entry name" value="CCP"/>
    <property type="match status" value="5"/>
</dbReference>
<dbReference type="CDD" id="cd00041">
    <property type="entry name" value="CUB"/>
    <property type="match status" value="3"/>
</dbReference>
<dbReference type="FunFam" id="2.60.120.290:FF:000090">
    <property type="entry name" value="Seizure 6-like protein"/>
    <property type="match status" value="1"/>
</dbReference>
<dbReference type="FunFam" id="2.10.70.10:FF:000025">
    <property type="entry name" value="seizure 6-like protein 2 isoform X2"/>
    <property type="match status" value="1"/>
</dbReference>
<dbReference type="FunFam" id="2.10.70.10:FF:000009">
    <property type="entry name" value="Seizure related 6 homolog like"/>
    <property type="match status" value="1"/>
</dbReference>
<dbReference type="FunFam" id="2.10.70.10:FF:000010">
    <property type="entry name" value="Seizure related 6 homolog like"/>
    <property type="match status" value="1"/>
</dbReference>
<dbReference type="FunFam" id="2.10.70.10:FF:000012">
    <property type="entry name" value="Seizure related 6 homolog like"/>
    <property type="match status" value="1"/>
</dbReference>
<dbReference type="FunFam" id="2.60.120.290:FF:000030">
    <property type="entry name" value="Seizure related 6 homolog like"/>
    <property type="match status" value="1"/>
</dbReference>
<dbReference type="Gene3D" id="2.10.70.10">
    <property type="entry name" value="Complement Module, domain 1"/>
    <property type="match status" value="5"/>
</dbReference>
<dbReference type="Gene3D" id="2.60.120.290">
    <property type="entry name" value="Spermadhesin, CUB domain"/>
    <property type="match status" value="3"/>
</dbReference>
<dbReference type="InterPro" id="IPR000859">
    <property type="entry name" value="CUB_dom"/>
</dbReference>
<dbReference type="InterPro" id="IPR051277">
    <property type="entry name" value="SEZ6_CSMD_C4BPB_Regulators"/>
</dbReference>
<dbReference type="InterPro" id="IPR035914">
    <property type="entry name" value="Sperma_CUB_dom_sf"/>
</dbReference>
<dbReference type="InterPro" id="IPR035976">
    <property type="entry name" value="Sushi/SCR/CCP_sf"/>
</dbReference>
<dbReference type="InterPro" id="IPR000436">
    <property type="entry name" value="Sushi_SCR_CCP_dom"/>
</dbReference>
<dbReference type="PANTHER" id="PTHR45656">
    <property type="entry name" value="PROTEIN CBR-CLEC-78"/>
    <property type="match status" value="1"/>
</dbReference>
<dbReference type="PANTHER" id="PTHR45656:SF8">
    <property type="entry name" value="SEIZURE 6-LIKE PROTEIN"/>
    <property type="match status" value="1"/>
</dbReference>
<dbReference type="Pfam" id="PF00431">
    <property type="entry name" value="CUB"/>
    <property type="match status" value="3"/>
</dbReference>
<dbReference type="Pfam" id="PF00084">
    <property type="entry name" value="Sushi"/>
    <property type="match status" value="5"/>
</dbReference>
<dbReference type="SMART" id="SM00032">
    <property type="entry name" value="CCP"/>
    <property type="match status" value="5"/>
</dbReference>
<dbReference type="SMART" id="SM00042">
    <property type="entry name" value="CUB"/>
    <property type="match status" value="3"/>
</dbReference>
<dbReference type="SUPFAM" id="SSF57535">
    <property type="entry name" value="Complement control module/SCR domain"/>
    <property type="match status" value="5"/>
</dbReference>
<dbReference type="SUPFAM" id="SSF49854">
    <property type="entry name" value="Spermadhesin, CUB domain"/>
    <property type="match status" value="3"/>
</dbReference>
<dbReference type="PROSITE" id="PS01180">
    <property type="entry name" value="CUB"/>
    <property type="match status" value="3"/>
</dbReference>
<dbReference type="PROSITE" id="PS50923">
    <property type="entry name" value="SUSHI"/>
    <property type="match status" value="5"/>
</dbReference>
<protein>
    <recommendedName>
        <fullName>Seizure 6-like protein</fullName>
    </recommendedName>
    <alternativeName>
        <fullName>Acupuncture-induced protein 1-L</fullName>
    </alternativeName>
    <alternativeName>
        <fullName>Brain-specific receptor-like protein B</fullName>
        <shortName>BSRP-B</shortName>
    </alternativeName>
</protein>
<proteinExistence type="evidence at protein level"/>
<reference key="1">
    <citation type="journal article" date="2006" name="FEBS Lett.">
        <title>Disturbance of cerebellar synaptic maturation in mutant mice lacking BSRPs, a novel brain-specific receptor-like protein family.</title>
        <authorList>
            <person name="Miyazaki T."/>
            <person name="Hashimoto K."/>
            <person name="Uda A."/>
            <person name="Sakagami H."/>
            <person name="Nakamura Y."/>
            <person name="Saito S.Y."/>
            <person name="Nishi M."/>
            <person name="Kume H."/>
            <person name="Tohgo A."/>
            <person name="Kaneko I."/>
            <person name="Kondo H."/>
            <person name="Fukunaga K."/>
            <person name="Kano M."/>
            <person name="Watanabe M."/>
            <person name="Takeshima H."/>
        </authorList>
    </citation>
    <scope>NUCLEOTIDE SEQUENCE [MRNA] (ISOFORM 2)</scope>
    <scope>SUBCELLULAR LOCATION</scope>
    <scope>TISSUE SPECIFICITY</scope>
    <scope>FUNCTION</scope>
    <scope>DISRUPTION PHENOTYPE</scope>
    <source>
        <strain>C57BL/6J</strain>
        <tissue>Brain</tissue>
    </source>
</reference>
<reference key="2">
    <citation type="journal article" date="2007" name="Physiol. Genomics">
        <title>Electroacupuncture suppresses myostatin gene expression: cell proliferative reaction in mouse skeletal muscle.</title>
        <authorList>
            <person name="Takaoka Y."/>
            <person name="Ohta M."/>
            <person name="Ito A."/>
            <person name="Takamatsu K."/>
            <person name="Sugano A."/>
            <person name="Funakoshi K."/>
            <person name="Takaoka N."/>
            <person name="Sato N."/>
            <person name="Yokozaki H."/>
            <person name="Arizono N."/>
            <person name="Goto S."/>
            <person name="Maeda E."/>
        </authorList>
    </citation>
    <scope>NUCLEOTIDE SEQUENCE [MRNA] (ISOFORM 1)</scope>
    <source>
        <strain>C57BL/6J</strain>
        <tissue>Brain</tissue>
    </source>
</reference>
<reference key="3">
    <citation type="journal article" date="2005" name="Science">
        <title>The transcriptional landscape of the mammalian genome.</title>
        <authorList>
            <person name="Carninci P."/>
            <person name="Kasukawa T."/>
            <person name="Katayama S."/>
            <person name="Gough J."/>
            <person name="Frith M.C."/>
            <person name="Maeda N."/>
            <person name="Oyama R."/>
            <person name="Ravasi T."/>
            <person name="Lenhard B."/>
            <person name="Wells C."/>
            <person name="Kodzius R."/>
            <person name="Shimokawa K."/>
            <person name="Bajic V.B."/>
            <person name="Brenner S.E."/>
            <person name="Batalov S."/>
            <person name="Forrest A.R."/>
            <person name="Zavolan M."/>
            <person name="Davis M.J."/>
            <person name="Wilming L.G."/>
            <person name="Aidinis V."/>
            <person name="Allen J.E."/>
            <person name="Ambesi-Impiombato A."/>
            <person name="Apweiler R."/>
            <person name="Aturaliya R.N."/>
            <person name="Bailey T.L."/>
            <person name="Bansal M."/>
            <person name="Baxter L."/>
            <person name="Beisel K.W."/>
            <person name="Bersano T."/>
            <person name="Bono H."/>
            <person name="Chalk A.M."/>
            <person name="Chiu K.P."/>
            <person name="Choudhary V."/>
            <person name="Christoffels A."/>
            <person name="Clutterbuck D.R."/>
            <person name="Crowe M.L."/>
            <person name="Dalla E."/>
            <person name="Dalrymple B.P."/>
            <person name="de Bono B."/>
            <person name="Della Gatta G."/>
            <person name="di Bernardo D."/>
            <person name="Down T."/>
            <person name="Engstrom P."/>
            <person name="Fagiolini M."/>
            <person name="Faulkner G."/>
            <person name="Fletcher C.F."/>
            <person name="Fukushima T."/>
            <person name="Furuno M."/>
            <person name="Futaki S."/>
            <person name="Gariboldi M."/>
            <person name="Georgii-Hemming P."/>
            <person name="Gingeras T.R."/>
            <person name="Gojobori T."/>
            <person name="Green R.E."/>
            <person name="Gustincich S."/>
            <person name="Harbers M."/>
            <person name="Hayashi Y."/>
            <person name="Hensch T.K."/>
            <person name="Hirokawa N."/>
            <person name="Hill D."/>
            <person name="Huminiecki L."/>
            <person name="Iacono M."/>
            <person name="Ikeo K."/>
            <person name="Iwama A."/>
            <person name="Ishikawa T."/>
            <person name="Jakt M."/>
            <person name="Kanapin A."/>
            <person name="Katoh M."/>
            <person name="Kawasawa Y."/>
            <person name="Kelso J."/>
            <person name="Kitamura H."/>
            <person name="Kitano H."/>
            <person name="Kollias G."/>
            <person name="Krishnan S.P."/>
            <person name="Kruger A."/>
            <person name="Kummerfeld S.K."/>
            <person name="Kurochkin I.V."/>
            <person name="Lareau L.F."/>
            <person name="Lazarevic D."/>
            <person name="Lipovich L."/>
            <person name="Liu J."/>
            <person name="Liuni S."/>
            <person name="McWilliam S."/>
            <person name="Madan Babu M."/>
            <person name="Madera M."/>
            <person name="Marchionni L."/>
            <person name="Matsuda H."/>
            <person name="Matsuzawa S."/>
            <person name="Miki H."/>
            <person name="Mignone F."/>
            <person name="Miyake S."/>
            <person name="Morris K."/>
            <person name="Mottagui-Tabar S."/>
            <person name="Mulder N."/>
            <person name="Nakano N."/>
            <person name="Nakauchi H."/>
            <person name="Ng P."/>
            <person name="Nilsson R."/>
            <person name="Nishiguchi S."/>
            <person name="Nishikawa S."/>
            <person name="Nori F."/>
            <person name="Ohara O."/>
            <person name="Okazaki Y."/>
            <person name="Orlando V."/>
            <person name="Pang K.C."/>
            <person name="Pavan W.J."/>
            <person name="Pavesi G."/>
            <person name="Pesole G."/>
            <person name="Petrovsky N."/>
            <person name="Piazza S."/>
            <person name="Reed J."/>
            <person name="Reid J.F."/>
            <person name="Ring B.Z."/>
            <person name="Ringwald M."/>
            <person name="Rost B."/>
            <person name="Ruan Y."/>
            <person name="Salzberg S.L."/>
            <person name="Sandelin A."/>
            <person name="Schneider C."/>
            <person name="Schoenbach C."/>
            <person name="Sekiguchi K."/>
            <person name="Semple C.A."/>
            <person name="Seno S."/>
            <person name="Sessa L."/>
            <person name="Sheng Y."/>
            <person name="Shibata Y."/>
            <person name="Shimada H."/>
            <person name="Shimada K."/>
            <person name="Silva D."/>
            <person name="Sinclair B."/>
            <person name="Sperling S."/>
            <person name="Stupka E."/>
            <person name="Sugiura K."/>
            <person name="Sultana R."/>
            <person name="Takenaka Y."/>
            <person name="Taki K."/>
            <person name="Tammoja K."/>
            <person name="Tan S.L."/>
            <person name="Tang S."/>
            <person name="Taylor M.S."/>
            <person name="Tegner J."/>
            <person name="Teichmann S.A."/>
            <person name="Ueda H.R."/>
            <person name="van Nimwegen E."/>
            <person name="Verardo R."/>
            <person name="Wei C.L."/>
            <person name="Yagi K."/>
            <person name="Yamanishi H."/>
            <person name="Zabarovsky E."/>
            <person name="Zhu S."/>
            <person name="Zimmer A."/>
            <person name="Hide W."/>
            <person name="Bult C."/>
            <person name="Grimmond S.M."/>
            <person name="Teasdale R.D."/>
            <person name="Liu E.T."/>
            <person name="Brusic V."/>
            <person name="Quackenbush J."/>
            <person name="Wahlestedt C."/>
            <person name="Mattick J.S."/>
            <person name="Hume D.A."/>
            <person name="Kai C."/>
            <person name="Sasaki D."/>
            <person name="Tomaru Y."/>
            <person name="Fukuda S."/>
            <person name="Kanamori-Katayama M."/>
            <person name="Suzuki M."/>
            <person name="Aoki J."/>
            <person name="Arakawa T."/>
            <person name="Iida J."/>
            <person name="Imamura K."/>
            <person name="Itoh M."/>
            <person name="Kato T."/>
            <person name="Kawaji H."/>
            <person name="Kawagashira N."/>
            <person name="Kawashima T."/>
            <person name="Kojima M."/>
            <person name="Kondo S."/>
            <person name="Konno H."/>
            <person name="Nakano K."/>
            <person name="Ninomiya N."/>
            <person name="Nishio T."/>
            <person name="Okada M."/>
            <person name="Plessy C."/>
            <person name="Shibata K."/>
            <person name="Shiraki T."/>
            <person name="Suzuki S."/>
            <person name="Tagami M."/>
            <person name="Waki K."/>
            <person name="Watahiki A."/>
            <person name="Okamura-Oho Y."/>
            <person name="Suzuki H."/>
            <person name="Kawai J."/>
            <person name="Hayashizaki Y."/>
        </authorList>
    </citation>
    <scope>NUCLEOTIDE SEQUENCE [LARGE SCALE MRNA] (ISOFORM 1)</scope>
    <source>
        <strain>C57BL/6J</strain>
        <tissue>Hippocampus</tissue>
    </source>
</reference>
<reference key="4">
    <citation type="journal article" date="2004" name="Genome Res.">
        <title>The status, quality, and expansion of the NIH full-length cDNA project: the Mammalian Gene Collection (MGC).</title>
        <authorList>
            <consortium name="The MGC Project Team"/>
        </authorList>
    </citation>
    <scope>NUCLEOTIDE SEQUENCE [LARGE SCALE MRNA] (ISOFORM 1)</scope>
    <source>
        <strain>C57BL/6J</strain>
        <tissue>Brain</tissue>
        <tissue>Eye</tissue>
    </source>
</reference>
<reference key="5">
    <citation type="journal article" date="2010" name="Cell">
        <title>A tissue-specific atlas of mouse protein phosphorylation and expression.</title>
        <authorList>
            <person name="Huttlin E.L."/>
            <person name="Jedrychowski M.P."/>
            <person name="Elias J.E."/>
            <person name="Goswami T."/>
            <person name="Rad R."/>
            <person name="Beausoleil S.A."/>
            <person name="Villen J."/>
            <person name="Haas W."/>
            <person name="Sowa M.E."/>
            <person name="Gygi S.P."/>
        </authorList>
    </citation>
    <scope>IDENTIFICATION BY MASS SPECTROMETRY [LARGE SCALE ANALYSIS]</scope>
    <source>
        <tissue>Brain</tissue>
    </source>
</reference>
<feature type="signal peptide" evidence="2">
    <location>
        <begin position="1"/>
        <end position="31"/>
    </location>
</feature>
<feature type="chain" id="PRO_0000333886" description="Seizure 6-like protein">
    <location>
        <begin position="32"/>
        <end position="963"/>
    </location>
</feature>
<feature type="topological domain" description="Extracellular" evidence="2">
    <location>
        <begin position="32"/>
        <end position="897"/>
    </location>
</feature>
<feature type="transmembrane region" description="Helical" evidence="2">
    <location>
        <begin position="898"/>
        <end position="918"/>
    </location>
</feature>
<feature type="topological domain" description="Cytoplasmic" evidence="2">
    <location>
        <begin position="919"/>
        <end position="963"/>
    </location>
</feature>
<feature type="domain" description="CUB 1" evidence="3">
    <location>
        <begin position="221"/>
        <end position="329"/>
    </location>
</feature>
<feature type="domain" description="Sushi 1" evidence="4">
    <location>
        <begin position="331"/>
        <end position="390"/>
    </location>
</feature>
<feature type="domain" description="CUB 2" evidence="3">
    <location>
        <begin position="392"/>
        <end position="502"/>
    </location>
</feature>
<feature type="domain" description="Sushi 2" evidence="4">
    <location>
        <begin position="505"/>
        <end position="566"/>
    </location>
</feature>
<feature type="domain" description="CUB 3" evidence="3">
    <location>
        <begin position="568"/>
        <end position="679"/>
    </location>
</feature>
<feature type="domain" description="Sushi 3" evidence="4">
    <location>
        <begin position="683"/>
        <end position="742"/>
    </location>
</feature>
<feature type="domain" description="Sushi 4" evidence="4">
    <location>
        <begin position="744"/>
        <end position="807"/>
    </location>
</feature>
<feature type="domain" description="Sushi 5" evidence="4">
    <location>
        <begin position="811"/>
        <end position="872"/>
    </location>
</feature>
<feature type="region of interest" description="Disordered" evidence="5">
    <location>
        <begin position="28"/>
        <end position="63"/>
    </location>
</feature>
<feature type="region of interest" description="Disordered" evidence="5">
    <location>
        <begin position="116"/>
        <end position="150"/>
    </location>
</feature>
<feature type="region of interest" description="Disordered" evidence="5">
    <location>
        <begin position="164"/>
        <end position="204"/>
    </location>
</feature>
<feature type="compositionally biased region" description="Low complexity" evidence="5">
    <location>
        <begin position="47"/>
        <end position="59"/>
    </location>
</feature>
<feature type="compositionally biased region" description="Polar residues" evidence="5">
    <location>
        <begin position="120"/>
        <end position="135"/>
    </location>
</feature>
<feature type="compositionally biased region" description="Low complexity" evidence="5">
    <location>
        <begin position="191"/>
        <end position="204"/>
    </location>
</feature>
<feature type="glycosylation site" description="N-linked (GlcNAc...) asparagine" evidence="2">
    <location>
        <position position="251"/>
    </location>
</feature>
<feature type="glycosylation site" description="N-linked (GlcNAc...) asparagine" evidence="2">
    <location>
        <position position="268"/>
    </location>
</feature>
<feature type="glycosylation site" description="N-linked (GlcNAc...) asparagine" evidence="2">
    <location>
        <position position="290"/>
    </location>
</feature>
<feature type="glycosylation site" description="N-linked (GlcNAc...) asparagine" evidence="2">
    <location>
        <position position="375"/>
    </location>
</feature>
<feature type="glycosylation site" description="N-linked (GlcNAc...) asparagine" evidence="2">
    <location>
        <position position="398"/>
    </location>
</feature>
<feature type="glycosylation site" description="N-linked (GlcNAc...) asparagine" evidence="2">
    <location>
        <position position="414"/>
    </location>
</feature>
<feature type="glycosylation site" description="N-linked (GlcNAc...) asparagine" evidence="2">
    <location>
        <position position="454"/>
    </location>
</feature>
<feature type="glycosylation site" description="N-linked (GlcNAc...) asparagine" evidence="2">
    <location>
        <position position="516"/>
    </location>
</feature>
<feature type="glycosylation site" description="N-linked (GlcNAc...) asparagine" evidence="2">
    <location>
        <position position="558"/>
    </location>
</feature>
<feature type="glycosylation site" description="N-linked (GlcNAc...) asparagine" evidence="2">
    <location>
        <position position="614"/>
    </location>
</feature>
<feature type="glycosylation site" description="N-linked (GlcNAc...) asparagine" evidence="2">
    <location>
        <position position="682"/>
    </location>
</feature>
<feature type="disulfide bond" evidence="1">
    <location>
        <begin position="221"/>
        <end position="248"/>
    </location>
</feature>
<feature type="disulfide bond" evidence="1">
    <location>
        <begin position="333"/>
        <end position="373"/>
    </location>
</feature>
<feature type="disulfide bond" evidence="1">
    <location>
        <begin position="359"/>
        <end position="388"/>
    </location>
</feature>
<feature type="disulfide bond" evidence="1">
    <location>
        <begin position="392"/>
        <end position="419"/>
    </location>
</feature>
<feature type="disulfide bond" evidence="1">
    <location>
        <begin position="507"/>
        <end position="549"/>
    </location>
</feature>
<feature type="disulfide bond" evidence="1">
    <location>
        <begin position="534"/>
        <end position="564"/>
    </location>
</feature>
<feature type="disulfide bond" evidence="1">
    <location>
        <begin position="568"/>
        <end position="594"/>
    </location>
</feature>
<feature type="disulfide bond" evidence="1">
    <location>
        <begin position="685"/>
        <end position="727"/>
    </location>
</feature>
<feature type="disulfide bond" evidence="1">
    <location>
        <begin position="713"/>
        <end position="740"/>
    </location>
</feature>
<feature type="disulfide bond" evidence="1">
    <location>
        <begin position="746"/>
        <end position="788"/>
    </location>
</feature>
<feature type="disulfide bond" evidence="1">
    <location>
        <begin position="774"/>
        <end position="805"/>
    </location>
</feature>
<feature type="disulfide bond" evidence="1">
    <location>
        <begin position="813"/>
        <end position="855"/>
    </location>
</feature>
<feature type="disulfide bond" evidence="1">
    <location>
        <begin position="841"/>
        <end position="870"/>
    </location>
</feature>
<feature type="splice variant" id="VSP_033594" description="In isoform 2." evidence="7">
    <original>SEESLACDNPGLPENGYQILYKRLYLPGESLTFMCYEGFELMGEVTIRCILGQPSHWSGPLPICKV</original>
    <variation>F</variation>
    <location>
        <begin position="807"/>
        <end position="872"/>
    </location>
</feature>
<feature type="sequence conflict" description="In Ref. 4; AAH56471/AAH99839." evidence="8" ref="4">
    <original>A</original>
    <variation>VA</variation>
    <location>
        <position position="883"/>
    </location>
</feature>
<feature type="sequence conflict" description="In Ref. 1; BAE44443, 2; AAZ99451, 3; BAC38818 and 4; AAH65117." evidence="8" ref="1 2 3 4">
    <location>
        <position position="883"/>
    </location>
</feature>
<evidence type="ECO:0000250" key="1"/>
<evidence type="ECO:0000255" key="2"/>
<evidence type="ECO:0000255" key="3">
    <source>
        <dbReference type="PROSITE-ProRule" id="PRU00059"/>
    </source>
</evidence>
<evidence type="ECO:0000255" key="4">
    <source>
        <dbReference type="PROSITE-ProRule" id="PRU00302"/>
    </source>
</evidence>
<evidence type="ECO:0000256" key="5">
    <source>
        <dbReference type="SAM" id="MobiDB-lite"/>
    </source>
</evidence>
<evidence type="ECO:0000269" key="6">
    <source>
    </source>
</evidence>
<evidence type="ECO:0000303" key="7">
    <source>
    </source>
</evidence>
<evidence type="ECO:0000305" key="8"/>
<evidence type="ECO:0000305" key="9">
    <source>
    </source>
</evidence>
<accession>Q6P1D5</accession>
<accession>Q3V651</accession>
<accession>Q499M3</accession>
<accession>Q6PHN6</accession>
<accession>Q8C420</accession>